<name>ATP8_HALGR</name>
<dbReference type="EMBL" id="X72004">
    <property type="protein sequence ID" value="CAA50881.1"/>
    <property type="molecule type" value="Genomic_DNA"/>
</dbReference>
<dbReference type="PIR" id="S41839">
    <property type="entry name" value="S41839"/>
</dbReference>
<dbReference type="RefSeq" id="NP_007073.1">
    <property type="nucleotide sequence ID" value="NC_001602.1"/>
</dbReference>
<dbReference type="SMR" id="P38592"/>
<dbReference type="GeneID" id="807755"/>
<dbReference type="CTD" id="4509"/>
<dbReference type="GO" id="GO:0031966">
    <property type="term" value="C:mitochondrial membrane"/>
    <property type="evidence" value="ECO:0007669"/>
    <property type="project" value="UniProtKB-SubCell"/>
</dbReference>
<dbReference type="GO" id="GO:0045259">
    <property type="term" value="C:proton-transporting ATP synthase complex"/>
    <property type="evidence" value="ECO:0000250"/>
    <property type="project" value="UniProtKB"/>
</dbReference>
<dbReference type="GO" id="GO:0015078">
    <property type="term" value="F:proton transmembrane transporter activity"/>
    <property type="evidence" value="ECO:0007669"/>
    <property type="project" value="InterPro"/>
</dbReference>
<dbReference type="GO" id="GO:0015986">
    <property type="term" value="P:proton motive force-driven ATP synthesis"/>
    <property type="evidence" value="ECO:0007669"/>
    <property type="project" value="InterPro"/>
</dbReference>
<dbReference type="InterPro" id="IPR039017">
    <property type="entry name" value="ATP8_mammal"/>
</dbReference>
<dbReference type="InterPro" id="IPR001421">
    <property type="entry name" value="ATP8_metazoa"/>
</dbReference>
<dbReference type="PANTHER" id="PTHR13722">
    <property type="entry name" value="ATP SYNTHASE PROTEIN 8"/>
    <property type="match status" value="1"/>
</dbReference>
<dbReference type="PANTHER" id="PTHR13722:SF0">
    <property type="entry name" value="ATP SYNTHASE PROTEIN 8"/>
    <property type="match status" value="1"/>
</dbReference>
<dbReference type="Pfam" id="PF00895">
    <property type="entry name" value="ATP-synt_8"/>
    <property type="match status" value="1"/>
</dbReference>
<accession>P38592</accession>
<feature type="chain" id="PRO_0000195533" description="ATP synthase F(0) complex subunit 8">
    <location>
        <begin position="1"/>
        <end position="67"/>
    </location>
</feature>
<feature type="transmembrane region" description="Helical" evidence="4">
    <location>
        <begin position="8"/>
        <end position="24"/>
    </location>
</feature>
<feature type="modified residue" description="N6-acetyllysine; alternate" evidence="2">
    <location>
        <position position="54"/>
    </location>
</feature>
<feature type="modified residue" description="N6-succinyllysine; alternate" evidence="2">
    <location>
        <position position="54"/>
    </location>
</feature>
<feature type="modified residue" description="N6-acetyllysine" evidence="2">
    <location>
        <position position="57"/>
    </location>
</feature>
<geneLocation type="mitochondrion"/>
<evidence type="ECO:0000250" key="1">
    <source>
        <dbReference type="UniProtKB" id="P03928"/>
    </source>
</evidence>
<evidence type="ECO:0000250" key="2">
    <source>
        <dbReference type="UniProtKB" id="P03930"/>
    </source>
</evidence>
<evidence type="ECO:0000250" key="3">
    <source>
        <dbReference type="UniProtKB" id="P19483"/>
    </source>
</evidence>
<evidence type="ECO:0000255" key="4"/>
<evidence type="ECO:0000305" key="5"/>
<gene>
    <name evidence="1" type="primary">MT-ATP8</name>
    <name type="synonym">ATP8</name>
    <name type="synonym">ATPASE8</name>
    <name type="synonym">MTATP8</name>
</gene>
<comment type="function">
    <text evidence="1 3">Subunit 8, of the mitochondrial membrane ATP synthase complex (F(1)F(0) ATP synthase or Complex V) that produces ATP from ADP in the presence of a proton gradient across the membrane which is generated by electron transport complexes of the respiratory chain. ATP synthase complex consist of a soluble F(1) head domain - the catalytic core - and a membrane F(1) domain - the membrane proton channel. These two domains are linked by a central stalk rotating inside the F(1) region and a stationary peripheral stalk. During catalysis, ATP synthesis in the catalytic domain of F(1) is coupled via a rotary mechanism of the central stalk subunits to proton translocation (By similarity). In vivo, can only synthesize ATP although its ATP hydrolase activity can be activated artificially in vitro (By similarity). Part of the complex F(0) domain (By similarity).</text>
</comment>
<comment type="subunit">
    <text evidence="1">Component of the ATP synthase complex composed at least of ATP5F1A/subunit alpha, ATP5F1B/subunit beta, ATP5MC1/subunit c (homooctomer), MT-ATP6/subunit a, MT-ATP8/subunit 8, ATP5ME/subunit e, ATP5MF/subunit f, ATP5MG/subunit g, ATP5MK/subunit k, ATP5MJ/subunit j, ATP5F1C/subunit gamma, ATP5F1D/subunit delta, ATP5F1E/subunit epsilon, ATP5PF/subunit F6, ATP5PB/subunit b, ATP5PD/subunit d, ATP5PO/subunit OSCP. ATP synthase complex consists of a soluble F(1) head domain (subunits alpha(3) and beta(3)) - the catalytic core - and a membrane F(0) domain - the membrane proton channel (subunits c, a, 8, e, f, g, k and j). These two domains are linked by a central stalk (subunits gamma, delta, and epsilon) rotating inside the F1 region and a stationary peripheral stalk (subunits F6, b, d, and OSCP). Interacts with PRICKLE3.</text>
</comment>
<comment type="subcellular location">
    <subcellularLocation>
        <location>Mitochondrion membrane</location>
        <topology>Single-pass membrane protein</topology>
    </subcellularLocation>
</comment>
<comment type="similarity">
    <text evidence="5">Belongs to the ATPase protein 8 family.</text>
</comment>
<organism>
    <name type="scientific">Halichoerus grypus</name>
    <name type="common">Gray seal</name>
    <name type="synonym">Phoca grypus</name>
    <dbReference type="NCBI Taxonomy" id="9711"/>
    <lineage>
        <taxon>Eukaryota</taxon>
        <taxon>Metazoa</taxon>
        <taxon>Chordata</taxon>
        <taxon>Craniata</taxon>
        <taxon>Vertebrata</taxon>
        <taxon>Euteleostomi</taxon>
        <taxon>Mammalia</taxon>
        <taxon>Eutheria</taxon>
        <taxon>Laurasiatheria</taxon>
        <taxon>Carnivora</taxon>
        <taxon>Caniformia</taxon>
        <taxon>Pinnipedia</taxon>
        <taxon>Phocidae</taxon>
        <taxon>Phocinae</taxon>
        <taxon>Halichoerus</taxon>
    </lineage>
</organism>
<protein>
    <recommendedName>
        <fullName evidence="1">ATP synthase F(0) complex subunit 8</fullName>
    </recommendedName>
    <alternativeName>
        <fullName>A6L</fullName>
    </alternativeName>
    <alternativeName>
        <fullName>F-ATPase subunit 8</fullName>
    </alternativeName>
</protein>
<sequence>MPQLDTSTWLIMISSMILTLFITFHLKVSKHYFPTNPEPKHTLLLKNSAPWEEKWTKIYSPLSLPLQ</sequence>
<keyword id="KW-0007">Acetylation</keyword>
<keyword id="KW-0066">ATP synthesis</keyword>
<keyword id="KW-0138">CF(0)</keyword>
<keyword id="KW-0375">Hydrogen ion transport</keyword>
<keyword id="KW-0406">Ion transport</keyword>
<keyword id="KW-0472">Membrane</keyword>
<keyword id="KW-0496">Mitochondrion</keyword>
<keyword id="KW-0812">Transmembrane</keyword>
<keyword id="KW-1133">Transmembrane helix</keyword>
<keyword id="KW-0813">Transport</keyword>
<reference key="1">
    <citation type="journal article" date="1993" name="J. Mol. Evol.">
        <title>The nucleotide sequence of the mitochondrial DNA molecule of the grey seal, Halichoerus grypus, and a comparison with mitochondrial sequences of other true seals.</title>
        <authorList>
            <person name="Arnason U."/>
            <person name="Gullberg A."/>
            <person name="Johnsson E."/>
            <person name="Ledje C."/>
        </authorList>
    </citation>
    <scope>NUCLEOTIDE SEQUENCE [GENOMIC DNA]</scope>
</reference>
<proteinExistence type="inferred from homology"/>